<accession>P10378</accession>
<accession>P15049</accession>
<accession>P77773</accession>
<accession>Q2MBK7</accession>
<evidence type="ECO:0000269" key="1">
    <source>
    </source>
</evidence>
<evidence type="ECO:0000269" key="2">
    <source>
    </source>
</evidence>
<evidence type="ECO:0000269" key="3">
    <source>
    </source>
</evidence>
<evidence type="ECO:0000269" key="4">
    <source>
    </source>
</evidence>
<evidence type="ECO:0000269" key="5">
    <source>
    </source>
</evidence>
<evidence type="ECO:0000269" key="6">
    <source>
    </source>
</evidence>
<evidence type="ECO:0000269" key="7">
    <source>
    </source>
</evidence>
<evidence type="ECO:0000269" key="8">
    <source>
    </source>
</evidence>
<evidence type="ECO:0000269" key="9">
    <source>
    </source>
</evidence>
<evidence type="ECO:0000269" key="10">
    <source>
    </source>
</evidence>
<evidence type="ECO:0000269" key="11">
    <source>
    </source>
</evidence>
<evidence type="ECO:0000269" key="12">
    <source>
    </source>
</evidence>
<evidence type="ECO:0000269" key="13">
    <source>
    </source>
</evidence>
<evidence type="ECO:0000269" key="14">
    <source>
    </source>
</evidence>
<evidence type="ECO:0000269" key="15">
    <source>
    </source>
</evidence>
<evidence type="ECO:0000269" key="16">
    <source>
    </source>
</evidence>
<evidence type="ECO:0000303" key="17">
    <source>
    </source>
</evidence>
<evidence type="ECO:0000303" key="18">
    <source>
    </source>
</evidence>
<evidence type="ECO:0000303" key="19">
    <source>
    </source>
</evidence>
<evidence type="ECO:0000305" key="20"/>
<evidence type="ECO:0000305" key="21">
    <source>
    </source>
</evidence>
<evidence type="ECO:0007829" key="22">
    <source>
        <dbReference type="PDB" id="3RG2"/>
    </source>
</evidence>
<evidence type="ECO:0007829" key="23">
    <source>
        <dbReference type="PDB" id="4IZ6"/>
    </source>
</evidence>
<evidence type="ECO:0007829" key="24">
    <source>
        <dbReference type="PDB" id="6IYK"/>
    </source>
</evidence>
<evidence type="ECO:0007829" key="25">
    <source>
        <dbReference type="PDB" id="8K5T"/>
    </source>
</evidence>
<name>ENTE_ECOLI</name>
<proteinExistence type="evidence at protein level"/>
<sequence length="536" mass="59112">MSIPFTRWPEEFARRYREKGYWQDLPLTDILTRHAASDSIAVIDGERQLSYRELNQAADNLACSLRRQGIKPGETALVQLGNVAELYITFFALLKLGVAPVLALFSHQRSELNAYASQIEPALLIADRQHALFSGDDFLNTFVTEHSSIRVVQLLNDSGEHNLQDAINHPAEDFTATPSPADEVAYFQLSGGTTGTPKLIPRTHNDYYYSVRRSVEICQFTQQTRYLCAIPAAHNYAMSSPGSLGVFLAGGTVVLAADPSATLCFPLIEKHQVNVTALVPPAVSLWLQALIEGESRAQLASLKLLQVGGARLSATLAARIPAEIGCQLQQVFGMAEGLVNYTRLDDSAEKIIHTQGYPMCPDDEVWVADAEGNPLPQGEVGRLMTRGPYTFRGYYKSPQHNASAFDANGFYCSGDLISIDPEGYITVQGREKDQINRGGEKIAAEEIENLLLRHPAVIYAALVSMEDELMGEKSCAYLVVKEPLRAVQVRRFLREQGIAEFKLPDRVECVDSLPLTAVGKVDKKQLRQWLASRASA</sequence>
<comment type="function">
    <text evidence="1 3 4 5 6 7 8 9 13 15">Involved in the biosynthesis of the siderophore enterobactin (enterochelin), which is a macrocyclic trimeric lactone of N-(2,3-dihydroxybenzoyl)-serine. The serine trilactone serves as a scaffolding for the three catechol functionalities that provide hexadentate coordination for the tightly ligated iron(2+) atoms. EntE processes via a two-step adenylation-ligation reaction (bi-uni-uni-bi ping-pong mechanism). First, it catalyzes the activation of the carboxylate group of 2,3-dihydroxy-benzoate (DHB), via a reversible ATP-dependent pyrophosphate exchange reactions to yield the acyladenylate intermediate 2,3-dihydroxybenzoyl-AMP. It can also transfer AMP to salicylate, 2,4-dihydroxybenzoate, gentisate and 2,3,4-trihydroxybenzoate. In the second step, DHB is transferred from 2,3-dihydroxybenzoyl-AMP onto the phosphopantetheinylated EntB (holo-EntB) to form DHB-holo-EntB. Then this product will serve in the formation of the amide bond between 2,3-dihydroxybenzoate (DHB) and L-serine. It can also transfer adenylated salicylate to holo-EntB.</text>
</comment>
<comment type="catalytic activity">
    <reaction evidence="1 3 6 7 8 13 15">
        <text>3 2,3-dihydroxybenzoate + 3 L-serine + 6 ATP = enterobactin + 6 AMP + 6 diphosphate + 4 H(+)</text>
        <dbReference type="Rhea" id="RHEA:30571"/>
        <dbReference type="ChEBI" id="CHEBI:15378"/>
        <dbReference type="ChEBI" id="CHEBI:30616"/>
        <dbReference type="ChEBI" id="CHEBI:33019"/>
        <dbReference type="ChEBI" id="CHEBI:33384"/>
        <dbReference type="ChEBI" id="CHEBI:36654"/>
        <dbReference type="ChEBI" id="CHEBI:77805"/>
        <dbReference type="ChEBI" id="CHEBI:456215"/>
        <dbReference type="EC" id="6.3.2.14"/>
    </reaction>
</comment>
<comment type="catalytic activity">
    <reaction evidence="1 3 6 7 8 13">
        <text>2,3-dihydroxybenzoate + holo-[ACP] + ATP = 2,3-dihydroxybenzoyl-[ACP] + AMP + diphosphate</text>
        <dbReference type="Rhea" id="RHEA:61652"/>
        <dbReference type="Rhea" id="RHEA-COMP:9685"/>
        <dbReference type="Rhea" id="RHEA-COMP:19024"/>
        <dbReference type="ChEBI" id="CHEBI:30616"/>
        <dbReference type="ChEBI" id="CHEBI:33019"/>
        <dbReference type="ChEBI" id="CHEBI:36654"/>
        <dbReference type="ChEBI" id="CHEBI:64479"/>
        <dbReference type="ChEBI" id="CHEBI:90610"/>
        <dbReference type="ChEBI" id="CHEBI:456215"/>
        <dbReference type="EC" id="6.2.1.71"/>
    </reaction>
</comment>
<comment type="catalytic activity">
    <reaction evidence="1 3 6 7 8 15 16">
        <text>2,3-dihydroxybenzoyl-5'-AMP + holo-[ACP] = 2,3-dihydroxybenzoyl-[ACP] + AMP + H(+)</text>
        <dbReference type="Rhea" id="RHEA:48604"/>
        <dbReference type="Rhea" id="RHEA-COMP:9685"/>
        <dbReference type="Rhea" id="RHEA-COMP:19024"/>
        <dbReference type="ChEBI" id="CHEBI:15378"/>
        <dbReference type="ChEBI" id="CHEBI:57417"/>
        <dbReference type="ChEBI" id="CHEBI:64479"/>
        <dbReference type="ChEBI" id="CHEBI:90610"/>
        <dbReference type="ChEBI" id="CHEBI:456215"/>
    </reaction>
</comment>
<comment type="activity regulation">
    <text evidence="7 9">Inhibited by the adenylate analogs, 5'-O-[N-(salicyl)sulfamoyl]adenosine (Sal-AMS) and 5'-O-[N-(2,3-dihydroxybenzoyl)sulfamoyl]adenosine (DHB-AMS). Adenylation of 2,3-dihydroxybenzoate (DHB) is enhanced by a protein-protein interaction between the EntA and EntE.</text>
</comment>
<comment type="biophysicochemical properties">
    <kinetics>
        <KM evidence="15">0.4 uM for holo-EntB (at pH 8.8 and 37 degrees Celsius)</KM>
        <KM evidence="3">0.5 uM for holo-EntB</KM>
        <KM evidence="7">2.5 uM for DHB (at pH 7.8 and 25 degrees Celsius)</KM>
        <KM evidence="13">2.7 uM for DHB</KM>
        <KM evidence="8">2.9 uM for DHB</KM>
        <KM evidence="7">2.9 uM for holo-EntB (at pH 7.8 and 25 degrees Celsius)</KM>
        <KM evidence="4">23.3 uM for holo-EntB (at pH 7.5 and 37 degrees Celsius)</KM>
        <KM evidence="7">70 uM for 3-hydroxybenzoate (at pH 7.8 and 25 degrees Celsius)</KM>
        <KM evidence="7">70 uM for salicylate (at pH 7.8 and 25 degrees Celsius)</KM>
        <KM evidence="6">400 uM for 5,5-diadenosine tetraphosphate</KM>
        <KM evidence="7">430 uM for ATP (at pH 7.8 and 25 degrees Celsius)</KM>
        <KM evidence="13">1200 uM for ATP</KM>
        <KM evidence="7">3100 uM for 4-aminosalicylate (at pH 7.8 and 25 degrees Celsius)</KM>
        <KM evidence="7">34.2 mM for D-pantetheine (at pH 7.8 and 25 degrees Celsius)</KM>
        <Vmax evidence="8">3168.2 pmol/min/mg enzyme</Vmax>
        <text evidence="3 4 7 15">kcat is 0.3 sec(-1) for 2,3-dihydroxybenzoate-AMP ligase activity with 3-hydroxybenzoate as substrate (at pH 7.8 and 25 degrees Celsius). kcat is 0.8 sec(-1) for 2,3-dihydroxybenzoate-AMP ligase activity with salicylate as substrate (at pH 7.8 and 25 degrees Celsius). kcat is 0.9 sec(-1) for S-dihydroxybenzoyltransferase activity with D-pantetheine as substrate (at pH 7.8 and 25 degrees Celsius). kcat is 2.8 sec(-1) for 2,3-dihydroxybenzoate-AMP ligase activity with ATP and DHB as substrates (at pH 7.8 and 25 degrees Celsius). kcat is 2.8 sec(-1) for S-dihydroxybenzoyltransferase activity with holo-EntB as substrate (at pH 7.8 and 25 degrees Celsius). kcat is 4.4 sec(-1) for 2,3-dihydroxybenzoate-AMP ligase activity with 4-aminosalicylate as substrate (at pH 7.8 and 25 degrees Celsius). kcat is 5.94 sec(-1) for S-dihydroxybenzoyltransferase activity with holo-EntB as substrate (at pH 7.8 and 25 degrees Celsius). kcat is 100 min(-1) for S-dihydroxybenzoyltransferase activity with holo-EntB as substrate (at pH 8.8 and 37 degrees Celsius). kcat is 140 min(-1) for S-dihydroxybenzoyltransferase activity with holo-EntB as substrate.</text>
    </kinetics>
</comment>
<comment type="pathway">
    <text evidence="21">Siderophore biosynthesis; enterobactin biosynthesis.</text>
</comment>
<comment type="subunit">
    <text evidence="9 10 11 13 16">Proteins EntB, EntD, EntE, and EntF form a multienzyme complex called enterobactin synthase. Monomer. EntA and EntE interact together.</text>
</comment>
<comment type="interaction">
    <interactant intactId="EBI-550322">
        <id>P10378</id>
    </interactant>
    <interactant intactId="EBI-1118936">
        <id>P15047</id>
        <label>entA</label>
    </interactant>
    <organismsDiffer>false</organismsDiffer>
    <experiments>5</experiments>
</comment>
<comment type="interaction">
    <interactant intactId="EBI-550322">
        <id>P10378</id>
    </interactant>
    <interactant intactId="EBI-547993">
        <id>P0ADI4</id>
        <label>entB</label>
    </interactant>
    <organismsDiffer>false</organismsDiffer>
    <experiments>3</experiments>
</comment>
<comment type="subcellular location">
    <subcellularLocation>
        <location evidence="2">Membrane</location>
    </subcellularLocation>
</comment>
<comment type="induction">
    <text evidence="12 14">Under conditions of iron deficiency and by the fur protein.</text>
</comment>
<comment type="miscellaneous">
    <text evidence="6">In the absence of holo-EntB, EntE can transfer the adenylate moiety of the 2,3-dihydroxybenzoyl-AMP intermediate to ATP, generating the stress signaling molecule Ap4A involved in the regulation of cell division during oxidative stress, and releasing 2,3-dihydroxybenzoate. It seems that the expression of EntE during iron starvation produces Ap(4)A to slow growth until intracellular iron stores can be restored.</text>
</comment>
<comment type="similarity">
    <text evidence="20">Belongs to the ATP-dependent AMP-binding enzyme family. EntE subfamily.</text>
</comment>
<organism>
    <name type="scientific">Escherichia coli (strain K12)</name>
    <dbReference type="NCBI Taxonomy" id="83333"/>
    <lineage>
        <taxon>Bacteria</taxon>
        <taxon>Pseudomonadati</taxon>
        <taxon>Pseudomonadota</taxon>
        <taxon>Gammaproteobacteria</taxon>
        <taxon>Enterobacterales</taxon>
        <taxon>Enterobacteriaceae</taxon>
        <taxon>Escherichia</taxon>
    </lineage>
</organism>
<keyword id="KW-0002">3D-structure</keyword>
<keyword id="KW-0012">Acyltransferase</keyword>
<keyword id="KW-0067">ATP-binding</keyword>
<keyword id="KW-0259">Enterobactin biosynthesis</keyword>
<keyword id="KW-0436">Ligase</keyword>
<keyword id="KW-0472">Membrane</keyword>
<keyword id="KW-0547">Nucleotide-binding</keyword>
<keyword id="KW-1185">Reference proteome</keyword>
<keyword id="KW-0808">Transferase</keyword>
<reference key="1">
    <citation type="journal article" date="1989" name="FEMS Microbiol. Lett.">
        <title>Nucleotide sequence of the Escherichia coli entE gene.</title>
        <authorList>
            <person name="Staab J.F."/>
            <person name="Elkins M.F."/>
            <person name="Earhart C.F."/>
        </authorList>
    </citation>
    <scope>NUCLEOTIDE SEQUENCE [GENOMIC DNA]</scope>
    <source>
        <strain>K12</strain>
    </source>
</reference>
<reference key="2">
    <citation type="submission" date="1997-01" db="EMBL/GenBank/DDBJ databases">
        <title>Sequence of minutes 4-25 of Escherichia coli.</title>
        <authorList>
            <person name="Chung E."/>
            <person name="Allen E."/>
            <person name="Araujo R."/>
            <person name="Aparicio A.M."/>
            <person name="Davis K."/>
            <person name="Duncan M."/>
            <person name="Federspiel N."/>
            <person name="Hyman R."/>
            <person name="Kalman S."/>
            <person name="Komp C."/>
            <person name="Kurdi O."/>
            <person name="Lew H."/>
            <person name="Lin D."/>
            <person name="Namath A."/>
            <person name="Oefner P."/>
            <person name="Roberts D."/>
            <person name="Schramm S."/>
            <person name="Davis R.W."/>
        </authorList>
    </citation>
    <scope>NUCLEOTIDE SEQUENCE [LARGE SCALE GENOMIC DNA]</scope>
    <source>
        <strain>K12 / MG1655 / ATCC 47076</strain>
    </source>
</reference>
<reference key="3">
    <citation type="journal article" date="1997" name="Science">
        <title>The complete genome sequence of Escherichia coli K-12.</title>
        <authorList>
            <person name="Blattner F.R."/>
            <person name="Plunkett G. III"/>
            <person name="Bloch C.A."/>
            <person name="Perna N.T."/>
            <person name="Burland V."/>
            <person name="Riley M."/>
            <person name="Collado-Vides J."/>
            <person name="Glasner J.D."/>
            <person name="Rode C.K."/>
            <person name="Mayhew G.F."/>
            <person name="Gregor J."/>
            <person name="Davis N.W."/>
            <person name="Kirkpatrick H.A."/>
            <person name="Goeden M.A."/>
            <person name="Rose D.J."/>
            <person name="Mau B."/>
            <person name="Shao Y."/>
        </authorList>
    </citation>
    <scope>NUCLEOTIDE SEQUENCE [LARGE SCALE GENOMIC DNA]</scope>
    <source>
        <strain>K12 / MG1655 / ATCC 47076</strain>
    </source>
</reference>
<reference key="4">
    <citation type="journal article" date="2006" name="Mol. Syst. Biol.">
        <title>Highly accurate genome sequences of Escherichia coli K-12 strains MG1655 and W3110.</title>
        <authorList>
            <person name="Hayashi K."/>
            <person name="Morooka N."/>
            <person name="Yamamoto Y."/>
            <person name="Fujita K."/>
            <person name="Isono K."/>
            <person name="Choi S."/>
            <person name="Ohtsubo E."/>
            <person name="Baba T."/>
            <person name="Wanner B.L."/>
            <person name="Mori H."/>
            <person name="Horiuchi T."/>
        </authorList>
    </citation>
    <scope>NUCLEOTIDE SEQUENCE [LARGE SCALE GENOMIC DNA]</scope>
    <source>
        <strain>K12 / W3110 / ATCC 27325 / DSM 5911</strain>
    </source>
</reference>
<reference key="5">
    <citation type="journal article" date="1990" name="FEMS Microbiol. Lett.">
        <title>Opacity factor from group A streptococci is an apoproteinase.</title>
        <authorList>
            <person name="Elkins M.F."/>
            <person name="Earhart C.F."/>
        </authorList>
    </citation>
    <scope>NUCLEOTIDE SEQUENCE [GENOMIC DNA] OF 1-8</scope>
    <source>
        <strain>K12</strain>
    </source>
</reference>
<reference key="6">
    <citation type="journal article" date="1989" name="J. Bacteriol.">
        <title>Nucleotide sequence of a cluster of Escherichia coli enterobactin biosynthesis genes: identification of entA and purification of its product 2,3-dihydro-2,3-dihydroxybenzoate dehydrogenase.</title>
        <authorList>
            <person name="Liu J."/>
            <person name="Duncan K."/>
            <person name="Walsh C.T."/>
        </authorList>
    </citation>
    <scope>NUCLEOTIDE SEQUENCE [GENOMIC DNA] OF 393-536</scope>
</reference>
<reference key="7">
    <citation type="journal article" date="1983" name="J. Bacteriol.">
        <title>Regulation of enterobactin iron transport in Escherichia coli: characterization of ent::Mu d(Apr lac) operon fusions.</title>
        <authorList>
            <person name="Fleming T.P."/>
            <person name="Nahlik M.S."/>
            <person name="McIntosh M.A."/>
        </authorList>
    </citation>
    <scope>INDUCTION</scope>
</reference>
<reference key="8">
    <citation type="journal article" date="1989" name="Biochemistry">
        <title>Subcloning, expression, and purification of the enterobactin biosynthetic enzyme 2,3-dihydroxybenzoate-AMP ligase: demonstration of enzyme-bound (2,3-dihydroxybenzoyl)adenylate product.</title>
        <authorList>
            <person name="Rusnak F."/>
            <person name="Faraci W.S."/>
            <person name="Walsh C.T."/>
        </authorList>
    </citation>
    <scope>FUNCTION</scope>
    <scope>CATALYTIC ACTIVITY</scope>
    <scope>BIOPHYSICOCHEMICAL PROPERTIES</scope>
    <scope>SUBUNIT</scope>
    <scope>SUBSTRATE SPECIFICITY</scope>
</reference>
<reference key="9">
    <citation type="journal article" date="1989" name="J. Bacteriol.">
        <title>Nucleotide sequence and transcriptional organization of the Escherichia coli enterobactin biosynthesis cistrons entB and entA.</title>
        <authorList>
            <person name="Nahlik M.S."/>
            <person name="Brickman T.J."/>
            <person name="Ozenberger B.A."/>
            <person name="McIntosh M.A."/>
        </authorList>
    </citation>
    <scope>INDUCTION</scope>
</reference>
<reference key="10">
    <citation type="journal article" date="1997" name="Biochemistry">
        <title>Enterobactin biosynthesis in Escherichia coli: isochorismate lyase (EntB) is a bifunctional enzyme that is phosphopantetheinylated by EntD and then acylated by EntE using ATP and 2,3-dihydroxybenzoate.</title>
        <authorList>
            <person name="Gehring A.M."/>
            <person name="Bradley K.A."/>
            <person name="Walsh C.T."/>
        </authorList>
    </citation>
    <scope>FUNCTION</scope>
    <scope>CATALYTIC ACTIVITY</scope>
    <scope>BIOPHYSICOCHEMICAL PROPERTIES</scope>
    <scope>SUBSTRATE SPECIFICITY</scope>
</reference>
<reference key="11">
    <citation type="journal article" date="1998" name="Biochemistry">
        <title>Reconstitution and characterization of the Escherichia coli enterobactin synthetase from EntB, EntE, and EntF.</title>
        <authorList>
            <person name="Gehring A.M."/>
            <person name="Mori I."/>
            <person name="Walsh C.T."/>
        </authorList>
    </citation>
    <scope>FUNCTION</scope>
    <scope>SUBUNIT</scope>
</reference>
<reference key="12">
    <citation type="journal article" date="2000" name="J. Bacteriol.">
        <title>Membrane association of the Escherichia coli enterobactin synthase proteins EntB/G, EntE, and EntF.</title>
        <authorList>
            <person name="Hantash F.M."/>
            <person name="Earhart C.F."/>
        </authorList>
    </citation>
    <scope>SUBCELLULAR LOCATION</scope>
</reference>
<reference key="13">
    <citation type="journal article" date="2000" name="Proc. Natl. Acad. Sci. U.S.A.">
        <title>The EntF and EntE adenylation domains of Escherichia coli enterobactin synthetase: sequestration and selectivity in acyl-AMP transfers to thiolation domain cosubstrates.</title>
        <authorList>
            <person name="Ehmann D.E."/>
            <person name="Shaw-Reid C.A."/>
            <person name="Losey H.C."/>
            <person name="Walsh C.T."/>
        </authorList>
    </citation>
    <scope>FUNCTION</scope>
    <scope>CATALYTIC ACTIVITY</scope>
    <scope>REACTION MECHANISM</scope>
</reference>
<reference key="14">
    <citation type="journal article" date="2006" name="Chem. Biol.">
        <title>Structure of the EntB multidomain nonribosomal peptide synthetase and functional analysis of its interaction with the EntE adenylation domain.</title>
        <authorList>
            <person name="Drake E.J."/>
            <person name="Nicolai D.A."/>
            <person name="Gulick A.M."/>
        </authorList>
    </citation>
    <scope>FUNCTION</scope>
    <scope>MUTAGENESIS OF ARG-437; LYS-473 AND ARG-494</scope>
    <scope>BIOPHYSICOCHEMICAL PROPERTIES</scope>
    <scope>REACTION MECHANISM</scope>
</reference>
<reference key="15">
    <citation type="journal article" date="2006" name="Proc. Natl. Acad. Sci. U.S.A.">
        <title>A protein interaction surface in nonribosomal peptide synthesis mapped by combinatorial mutagenesis and selection.</title>
        <authorList>
            <person name="Lai J.R."/>
            <person name="Fischbach M.A."/>
            <person name="Liu D.R."/>
            <person name="Walsh C.T."/>
        </authorList>
    </citation>
    <scope>FUNCTION</scope>
    <scope>CATALYTIC ACTIVITY</scope>
    <scope>BIOPHYSICOCHEMICAL PROPERTIES</scope>
</reference>
<reference key="16">
    <citation type="journal article" date="2009" name="Biochemistry">
        <title>Enterobactin synthetase-catalyzed formation of P(1),P(3)-diadenosine-5'-tetraphosphate.</title>
        <authorList>
            <person name="Sikora A.L."/>
            <person name="Cahill S.M."/>
            <person name="Blanchard J.S."/>
        </authorList>
    </citation>
    <scope>FUNCTION</scope>
    <scope>CATALYTIC ACTIVITY</scope>
    <scope>BIOPHYSICOCHEMICAL PROPERTIES</scope>
    <scope>MISCELLANEOUS</scope>
</reference>
<reference key="17">
    <citation type="journal article" date="2009" name="J. Mol. Biol.">
        <title>Ligand-induced conformational rearrangements promote interaction between the Escherichia coli enterobactin biosynthetic proteins EntE and EntB.</title>
        <authorList>
            <person name="Khalil S."/>
            <person name="Pawelek P.D."/>
        </authorList>
    </citation>
    <scope>FUNCTION</scope>
    <scope>SUBSTRATE SPECIFICITY</scope>
</reference>
<reference key="18">
    <citation type="journal article" date="2010" name="Biochemistry">
        <title>Kinetic and inhibition studies of dihydroxybenzoate-AMP ligase from Escherichia coli.</title>
        <authorList>
            <person name="Sikora A.L."/>
            <person name="Wilson D.J."/>
            <person name="Aldrich C.C."/>
            <person name="Blanchard J.S."/>
        </authorList>
    </citation>
    <scope>FUNCTION</scope>
    <scope>CATALYTIC ACTIVITY</scope>
    <scope>BIOPHYSICOCHEMICAL PROPERTIES</scope>
    <scope>ACTIVITY REGULATION</scope>
    <scope>REACTION MECHANISM</scope>
</reference>
<reference key="19">
    <citation type="journal article" date="2010" name="Biochemistry">
        <title>MbtH-like proteins as integral components of bacterial nonribosomal peptide synthetases.</title>
        <authorList>
            <person name="Felnagle E.A."/>
            <person name="Barkei J.J."/>
            <person name="Park H."/>
            <person name="Podevels A.M."/>
            <person name="McMahon M.D."/>
            <person name="Drott D.W."/>
            <person name="Thomas M.G."/>
        </authorList>
    </citation>
    <scope>FUNCTION</scope>
    <scope>CATALYTIC ACTIVITY</scope>
    <scope>BIOPHYSICOCHEMICAL PROPERTIES</scope>
</reference>
<reference key="20">
    <citation type="journal article" date="2011" name="Biochemistry">
        <title>Enzymatic adenylation of 2,3-dihydroxybenzoate is enhanced by a protein-protein interaction between Escherichia coli 2,3-dihydro-2,3-dihydroxybenzoate dehydrogenase (EntA) and 2,3-dihydroxybenzoate-AMP ligase (EntE).</title>
        <authorList>
            <person name="Khalil S."/>
            <person name="Pawelek P.D."/>
        </authorList>
    </citation>
    <scope>FUNCTION</scope>
    <scope>SUBUNIT</scope>
    <scope>ACTIVITY REGULATION</scope>
</reference>
<reference key="21">
    <citation type="journal article" date="2012" name="Chem. Biol.">
        <title>Structural and functional investigation of the intermolecular interaction between NRPS adenylation and carrier protein domains.</title>
        <authorList>
            <person name="Sundlov J.A."/>
            <person name="Shi C."/>
            <person name="Wilson D.J."/>
            <person name="Aldrich C.C."/>
            <person name="Gulick A.M."/>
        </authorList>
    </citation>
    <scope>X-RAY CRYSTALLOGRAPHY (3.10 ANGSTROMS) IN COMPLEX WITH SUBSTRATE ANALOG AND PHOSPHOPANTETHEINE</scope>
    <scope>SUBUNIT</scope>
</reference>
<reference key="22">
    <citation type="journal article" date="2013" name="Acta Crystallogr. D">
        <title>Structure determination of the functional domain interaction of a chimeric nonribosomal peptide synthetase from a challenging crystal with noncrystallographic translational symmetry.</title>
        <authorList>
            <person name="Sundlov J.A."/>
            <person name="Gulick A.M."/>
        </authorList>
    </citation>
    <scope>X-RAY CRYSTALLOGRAPHY (2.40 ANGSTROMS) OF CHIMERIC ENTE-ENTB CONSTRUCT IN COMPLEX WITH SUBSTRATE ANALOG AND PHOSPHOPANTETHEINE</scope>
    <scope>SUBUNIT</scope>
</reference>
<dbReference type="EC" id="6.3.2.14" evidence="1 3 6 7 8 13 15"/>
<dbReference type="EC" id="6.2.1.71" evidence="1 3 6 7 8 13"/>
<dbReference type="EMBL" id="X15058">
    <property type="protein sequence ID" value="CAA33158.1"/>
    <property type="molecule type" value="Genomic_DNA"/>
</dbReference>
<dbReference type="EMBL" id="U82598">
    <property type="protein sequence ID" value="AAB40794.1"/>
    <property type="molecule type" value="Genomic_DNA"/>
</dbReference>
<dbReference type="EMBL" id="U00096">
    <property type="protein sequence ID" value="AAC73695.1"/>
    <property type="molecule type" value="Genomic_DNA"/>
</dbReference>
<dbReference type="EMBL" id="AP009048">
    <property type="protein sequence ID" value="BAE76349.1"/>
    <property type="molecule type" value="Genomic_DNA"/>
</dbReference>
<dbReference type="EMBL" id="M24148">
    <property type="protein sequence ID" value="AAA16101.1"/>
    <property type="molecule type" value="Unassigned_DNA"/>
</dbReference>
<dbReference type="EMBL" id="M36700">
    <property type="protein sequence ID" value="AAA18492.1"/>
    <property type="molecule type" value="Genomic_DNA"/>
</dbReference>
<dbReference type="PIR" id="H64792">
    <property type="entry name" value="SYECEB"/>
</dbReference>
<dbReference type="RefSeq" id="NP_415126.1">
    <property type="nucleotide sequence ID" value="NC_000913.3"/>
</dbReference>
<dbReference type="RefSeq" id="WP_000026812.1">
    <property type="nucleotide sequence ID" value="NZ_SSZK01000032.1"/>
</dbReference>
<dbReference type="PDB" id="3RG2">
    <property type="method" value="X-ray"/>
    <property type="resolution" value="3.10 A"/>
    <property type="chains" value="A/B/C/D/E/F/G/H/I/J=1-536"/>
</dbReference>
<dbReference type="PDB" id="4IZ6">
    <property type="method" value="X-ray"/>
    <property type="resolution" value="2.40 A"/>
    <property type="chains" value="A/B=1-536"/>
</dbReference>
<dbReference type="PDB" id="6IYK">
    <property type="method" value="X-ray"/>
    <property type="resolution" value="2.45 A"/>
    <property type="chains" value="A/B=1-536"/>
</dbReference>
<dbReference type="PDB" id="6IYL">
    <property type="method" value="X-ray"/>
    <property type="resolution" value="2.56 A"/>
    <property type="chains" value="A/B=1-536"/>
</dbReference>
<dbReference type="PDB" id="8K5S">
    <property type="method" value="X-ray"/>
    <property type="resolution" value="2.65 A"/>
    <property type="chains" value="A/B=1-536"/>
</dbReference>
<dbReference type="PDB" id="8K5T">
    <property type="method" value="X-ray"/>
    <property type="resolution" value="2.80 A"/>
    <property type="chains" value="A/B=1-536"/>
</dbReference>
<dbReference type="PDBsum" id="3RG2"/>
<dbReference type="PDBsum" id="4IZ6"/>
<dbReference type="PDBsum" id="6IYK"/>
<dbReference type="PDBsum" id="6IYL"/>
<dbReference type="PDBsum" id="8K5S"/>
<dbReference type="PDBsum" id="8K5T"/>
<dbReference type="SMR" id="P10378"/>
<dbReference type="BioGRID" id="4259905">
    <property type="interactions" value="326"/>
</dbReference>
<dbReference type="BioGRID" id="851747">
    <property type="interactions" value="5"/>
</dbReference>
<dbReference type="ComplexPortal" id="CPX-5747">
    <property type="entry name" value="entAE 2,3-dihydroxybenzoate-AMP ligase complex"/>
</dbReference>
<dbReference type="ComplexPortal" id="CPX-5748">
    <property type="entry name" value="entBE aryl carrier complex"/>
</dbReference>
<dbReference type="DIP" id="DIP-9515N"/>
<dbReference type="FunCoup" id="P10378">
    <property type="interactions" value="50"/>
</dbReference>
<dbReference type="IntAct" id="P10378">
    <property type="interactions" value="14"/>
</dbReference>
<dbReference type="STRING" id="511145.b0594"/>
<dbReference type="BindingDB" id="P10378"/>
<dbReference type="ChEMBL" id="CHEMBL4856"/>
<dbReference type="jPOST" id="P10378"/>
<dbReference type="PaxDb" id="511145-b0594"/>
<dbReference type="EnsemblBacteria" id="AAC73695">
    <property type="protein sequence ID" value="AAC73695"/>
    <property type="gene ID" value="b0594"/>
</dbReference>
<dbReference type="GeneID" id="947426"/>
<dbReference type="KEGG" id="ecj:JW0586"/>
<dbReference type="KEGG" id="eco:b0594"/>
<dbReference type="KEGG" id="ecoc:C3026_02965"/>
<dbReference type="PATRIC" id="fig|1411691.4.peg.1675"/>
<dbReference type="EchoBASE" id="EB0259"/>
<dbReference type="eggNOG" id="COG1021">
    <property type="taxonomic scope" value="Bacteria"/>
</dbReference>
<dbReference type="HOGENOM" id="CLU_000022_59_7_6"/>
<dbReference type="InParanoid" id="P10378"/>
<dbReference type="OMA" id="TFRGYYR"/>
<dbReference type="OrthoDB" id="9803968at2"/>
<dbReference type="PhylomeDB" id="P10378"/>
<dbReference type="BioCyc" id="EcoCyc:ENTE-MONOMER"/>
<dbReference type="BioCyc" id="MetaCyc:ENTE-MONOMER"/>
<dbReference type="BRENDA" id="2.7.7.58">
    <property type="organism ID" value="2026"/>
</dbReference>
<dbReference type="BRENDA" id="6.2.1.71">
    <property type="organism ID" value="2026"/>
</dbReference>
<dbReference type="BRENDA" id="6.3.2.14">
    <property type="organism ID" value="2026"/>
</dbReference>
<dbReference type="UniPathway" id="UPA00017"/>
<dbReference type="PRO" id="PR:P10378"/>
<dbReference type="Proteomes" id="UP000000625">
    <property type="component" value="Chromosome"/>
</dbReference>
<dbReference type="GO" id="GO:0005829">
    <property type="term" value="C:cytosol"/>
    <property type="evidence" value="ECO:0000314"/>
    <property type="project" value="EcoCyc"/>
</dbReference>
<dbReference type="GO" id="GO:0016020">
    <property type="term" value="C:membrane"/>
    <property type="evidence" value="ECO:0007669"/>
    <property type="project" value="UniProtKB-SubCell"/>
</dbReference>
<dbReference type="GO" id="GO:0008668">
    <property type="term" value="F:2,3-dihydroxybenzoate--[aryl-carrier protein] ligase"/>
    <property type="evidence" value="ECO:0000314"/>
    <property type="project" value="EcoCyc"/>
</dbReference>
<dbReference type="GO" id="GO:0047527">
    <property type="term" value="F:2,3-dihydroxybenzoate-serine ligase activity"/>
    <property type="evidence" value="ECO:0000314"/>
    <property type="project" value="UniProtKB"/>
</dbReference>
<dbReference type="GO" id="GO:0016746">
    <property type="term" value="F:acyltransferase activity"/>
    <property type="evidence" value="ECO:0007669"/>
    <property type="project" value="UniProtKB-KW"/>
</dbReference>
<dbReference type="GO" id="GO:0005524">
    <property type="term" value="F:ATP binding"/>
    <property type="evidence" value="ECO:0007669"/>
    <property type="project" value="UniProtKB-KW"/>
</dbReference>
<dbReference type="GO" id="GO:0009239">
    <property type="term" value="P:enterobactin biosynthetic process"/>
    <property type="evidence" value="ECO:0000314"/>
    <property type="project" value="ComplexPortal"/>
</dbReference>
<dbReference type="CDD" id="cd05920">
    <property type="entry name" value="23DHB-AMP_lg"/>
    <property type="match status" value="1"/>
</dbReference>
<dbReference type="FunFam" id="3.30.300.30:FF:000021">
    <property type="entry name" value="Enterobactin synthase component E"/>
    <property type="match status" value="1"/>
</dbReference>
<dbReference type="FunFam" id="3.40.50.12780:FF:000031">
    <property type="entry name" value="Enterobactin synthase component E"/>
    <property type="match status" value="1"/>
</dbReference>
<dbReference type="FunFam" id="2.30.38.10:FF:000003">
    <property type="entry name" value="Vibriobactin-specific 2,3-dihydroxybenzoate-AMP ligase"/>
    <property type="match status" value="1"/>
</dbReference>
<dbReference type="Gene3D" id="3.30.300.30">
    <property type="match status" value="1"/>
</dbReference>
<dbReference type="Gene3D" id="3.40.50.12780">
    <property type="entry name" value="N-terminal domain of ligase-like"/>
    <property type="match status" value="1"/>
</dbReference>
<dbReference type="InterPro" id="IPR025110">
    <property type="entry name" value="AMP-bd_C"/>
</dbReference>
<dbReference type="InterPro" id="IPR045851">
    <property type="entry name" value="AMP-bd_C_sf"/>
</dbReference>
<dbReference type="InterPro" id="IPR020845">
    <property type="entry name" value="AMP-binding_CS"/>
</dbReference>
<dbReference type="InterPro" id="IPR000873">
    <property type="entry name" value="AMP-dep_synth/lig_dom"/>
</dbReference>
<dbReference type="InterPro" id="IPR042099">
    <property type="entry name" value="ANL_N_sf"/>
</dbReference>
<dbReference type="InterPro" id="IPR050237">
    <property type="entry name" value="ATP-dep_AMP-bd_enzyme"/>
</dbReference>
<dbReference type="InterPro" id="IPR011963">
    <property type="entry name" value="DHB_AMP_lig"/>
</dbReference>
<dbReference type="NCBIfam" id="TIGR02275">
    <property type="entry name" value="DHB_AMP_lig"/>
    <property type="match status" value="1"/>
</dbReference>
<dbReference type="NCBIfam" id="NF008192">
    <property type="entry name" value="PRK10946.1"/>
    <property type="match status" value="1"/>
</dbReference>
<dbReference type="PANTHER" id="PTHR43767">
    <property type="entry name" value="LONG-CHAIN-FATTY-ACID--COA LIGASE"/>
    <property type="match status" value="1"/>
</dbReference>
<dbReference type="PANTHER" id="PTHR43767:SF1">
    <property type="entry name" value="NONRIBOSOMAL PEPTIDE SYNTHASE PES1 (EUROFUNG)-RELATED"/>
    <property type="match status" value="1"/>
</dbReference>
<dbReference type="Pfam" id="PF00501">
    <property type="entry name" value="AMP-binding"/>
    <property type="match status" value="1"/>
</dbReference>
<dbReference type="Pfam" id="PF13193">
    <property type="entry name" value="AMP-binding_C"/>
    <property type="match status" value="1"/>
</dbReference>
<dbReference type="SUPFAM" id="SSF56801">
    <property type="entry name" value="Acetyl-CoA synthetase-like"/>
    <property type="match status" value="1"/>
</dbReference>
<dbReference type="PROSITE" id="PS00455">
    <property type="entry name" value="AMP_BINDING"/>
    <property type="match status" value="1"/>
</dbReference>
<gene>
    <name evidence="17" type="primary">entE</name>
    <name type="ordered locus">b0594</name>
    <name type="ordered locus">JW0586</name>
</gene>
<protein>
    <recommendedName>
        <fullName evidence="19">Enterobactin synthase component E</fullName>
        <ecNumber evidence="1 3 6 7 8 13 15">6.3.2.14</ecNumber>
    </recommendedName>
    <alternativeName>
        <fullName evidence="18">2,3-dihydroxybenzoate-AMP ligase</fullName>
        <shortName evidence="18">DHB-AMP ligase</shortName>
    </alternativeName>
    <alternativeName>
        <fullName evidence="20">2,3-dihydroxybenzoate-AMP synthase</fullName>
        <ecNumber evidence="1 3 6 7 8 13">6.2.1.71</ecNumber>
    </alternativeName>
    <alternativeName>
        <fullName evidence="18">Dihydroxybenzoic acid-activating enzyme</fullName>
    </alternativeName>
    <alternativeName>
        <fullName evidence="19">Enterochelin synthase E</fullName>
    </alternativeName>
</protein>
<feature type="chain" id="PRO_0000193075" description="Enterobactin synthase component E">
    <location>
        <begin position="1"/>
        <end position="536"/>
    </location>
</feature>
<feature type="region of interest" description="Phosphopantetheine binding" evidence="10 11">
    <location>
        <begin position="438"/>
        <end position="439"/>
    </location>
</feature>
<feature type="binding site" evidence="10">
    <location>
        <position position="235"/>
    </location>
    <ligand>
        <name>substrate</name>
    </ligand>
</feature>
<feature type="binding site" evidence="11">
    <location>
        <position position="240"/>
    </location>
    <ligand>
        <name>substrate</name>
    </ligand>
</feature>
<feature type="binding site" evidence="10 11">
    <location>
        <position position="309"/>
    </location>
    <ligand>
        <name>substrate</name>
    </ligand>
</feature>
<feature type="binding site" evidence="10 11">
    <location>
        <position position="331"/>
    </location>
    <ligand>
        <name>substrate</name>
    </ligand>
</feature>
<feature type="binding site" evidence="10">
    <location>
        <position position="335"/>
    </location>
    <ligand>
        <name>substrate</name>
    </ligand>
</feature>
<feature type="binding site" evidence="10 11">
    <location>
        <position position="415"/>
    </location>
    <ligand>
        <name>substrate</name>
    </ligand>
</feature>
<feature type="binding site" evidence="11">
    <location>
        <position position="432"/>
    </location>
    <ligand>
        <name>substrate</name>
    </ligand>
</feature>
<feature type="binding site" evidence="11">
    <location>
        <position position="441"/>
    </location>
    <ligand>
        <name>substrate</name>
    </ligand>
</feature>
<feature type="mutagenesis site" description="Catalyzes the adenylation reaction with 10% reduction of activity compared to the wild-type. 3% reduction of activity compared to the wild-type; when associated with D-473." evidence="4">
    <original>R</original>
    <variation>D</variation>
    <location>
        <position position="437"/>
    </location>
</feature>
<feature type="mutagenesis site" description="Catalyzes the adenylation reaction with same activity as the wild-type. 3% reduction of activity compared to the wild-type; when associated with D-437." evidence="4">
    <original>K</original>
    <variation>D</variation>
    <location>
        <position position="473"/>
    </location>
</feature>
<feature type="mutagenesis site" description="Catalyzes the adenylation reaction with same activity as the wild-type." evidence="4">
    <original>R</original>
    <variation>D</variation>
    <location>
        <position position="494"/>
    </location>
</feature>
<feature type="sequence conflict" description="In Ref. 1; CAA33158." evidence="20" ref="1">
    <original>DAEGNPLPQG</original>
    <variation>ECRRKSTAAR</variation>
    <location>
        <begin position="369"/>
        <end position="378"/>
    </location>
</feature>
<feature type="helix" evidence="23">
    <location>
        <begin position="10"/>
        <end position="18"/>
    </location>
</feature>
<feature type="helix" evidence="23">
    <location>
        <begin position="29"/>
        <end position="32"/>
    </location>
</feature>
<feature type="turn" evidence="23">
    <location>
        <begin position="33"/>
        <end position="36"/>
    </location>
</feature>
<feature type="strand" evidence="23">
    <location>
        <begin position="39"/>
        <end position="44"/>
    </location>
</feature>
<feature type="strand" evidence="23">
    <location>
        <begin position="47"/>
        <end position="50"/>
    </location>
</feature>
<feature type="helix" evidence="23">
    <location>
        <begin position="51"/>
        <end position="67"/>
    </location>
</feature>
<feature type="strand" evidence="23">
    <location>
        <begin position="75"/>
        <end position="79"/>
    </location>
</feature>
<feature type="helix" evidence="23">
    <location>
        <begin position="85"/>
        <end position="96"/>
    </location>
</feature>
<feature type="strand" evidence="23">
    <location>
        <begin position="99"/>
        <end position="103"/>
    </location>
</feature>
<feature type="helix" evidence="23">
    <location>
        <begin position="109"/>
        <end position="119"/>
    </location>
</feature>
<feature type="strand" evidence="23">
    <location>
        <begin position="122"/>
        <end position="127"/>
    </location>
</feature>
<feature type="helix" evidence="23">
    <location>
        <begin position="131"/>
        <end position="133"/>
    </location>
</feature>
<feature type="strand" evidence="23">
    <location>
        <begin position="134"/>
        <end position="136"/>
    </location>
</feature>
<feature type="helix" evidence="23">
    <location>
        <begin position="137"/>
        <end position="145"/>
    </location>
</feature>
<feature type="turn" evidence="25">
    <location>
        <begin position="146"/>
        <end position="148"/>
    </location>
</feature>
<feature type="strand" evidence="23">
    <location>
        <begin position="151"/>
        <end position="155"/>
    </location>
</feature>
<feature type="helix" evidence="23">
    <location>
        <begin position="163"/>
        <end position="168"/>
    </location>
</feature>
<feature type="strand" evidence="23">
    <location>
        <begin position="183"/>
        <end position="189"/>
    </location>
</feature>
<feature type="strand" evidence="24">
    <location>
        <begin position="193"/>
        <end position="196"/>
    </location>
</feature>
<feature type="strand" evidence="23">
    <location>
        <begin position="199"/>
        <end position="203"/>
    </location>
</feature>
<feature type="helix" evidence="23">
    <location>
        <begin position="204"/>
        <end position="218"/>
    </location>
</feature>
<feature type="strand" evidence="23">
    <location>
        <begin position="225"/>
        <end position="228"/>
    </location>
</feature>
<feature type="helix" evidence="23">
    <location>
        <begin position="235"/>
        <end position="239"/>
    </location>
</feature>
<feature type="helix" evidence="23">
    <location>
        <begin position="242"/>
        <end position="249"/>
    </location>
</feature>
<feature type="strand" evidence="23">
    <location>
        <begin position="252"/>
        <end position="255"/>
    </location>
</feature>
<feature type="helix" evidence="23">
    <location>
        <begin position="261"/>
        <end position="271"/>
    </location>
</feature>
<feature type="strand" evidence="23">
    <location>
        <begin position="275"/>
        <end position="278"/>
    </location>
</feature>
<feature type="helix" evidence="23">
    <location>
        <begin position="280"/>
        <end position="291"/>
    </location>
</feature>
<feature type="helix" evidence="23">
    <location>
        <begin position="296"/>
        <end position="299"/>
    </location>
</feature>
<feature type="strand" evidence="23">
    <location>
        <begin position="304"/>
        <end position="310"/>
    </location>
</feature>
<feature type="helix" evidence="23">
    <location>
        <begin position="314"/>
        <end position="323"/>
    </location>
</feature>
<feature type="strand" evidence="23">
    <location>
        <begin position="326"/>
        <end position="334"/>
    </location>
</feature>
<feature type="strand" evidence="23">
    <location>
        <begin position="337"/>
        <end position="341"/>
    </location>
</feature>
<feature type="helix" evidence="23">
    <location>
        <begin position="348"/>
        <end position="353"/>
    </location>
</feature>
<feature type="strand" evidence="23">
    <location>
        <begin position="357"/>
        <end position="360"/>
    </location>
</feature>
<feature type="strand" evidence="23">
    <location>
        <begin position="364"/>
        <end position="368"/>
    </location>
</feature>
<feature type="strand" evidence="25">
    <location>
        <begin position="370"/>
        <end position="372"/>
    </location>
</feature>
<feature type="strand" evidence="23">
    <location>
        <begin position="380"/>
        <end position="386"/>
    </location>
</feature>
<feature type="strand" evidence="25">
    <location>
        <begin position="388"/>
        <end position="390"/>
    </location>
</feature>
<feature type="helix" evidence="23">
    <location>
        <begin position="398"/>
        <end position="404"/>
    </location>
</feature>
<feature type="strand" evidence="23">
    <location>
        <begin position="411"/>
        <end position="419"/>
    </location>
</feature>
<feature type="strand" evidence="23">
    <location>
        <begin position="425"/>
        <end position="430"/>
    </location>
</feature>
<feature type="strand" evidence="23">
    <location>
        <begin position="432"/>
        <end position="437"/>
    </location>
</feature>
<feature type="strand" evidence="23">
    <location>
        <begin position="440"/>
        <end position="443"/>
    </location>
</feature>
<feature type="helix" evidence="23">
    <location>
        <begin position="444"/>
        <end position="451"/>
    </location>
</feature>
<feature type="strand" evidence="23">
    <location>
        <begin position="457"/>
        <end position="467"/>
    </location>
</feature>
<feature type="turn" evidence="23">
    <location>
        <begin position="468"/>
        <end position="470"/>
    </location>
</feature>
<feature type="strand" evidence="23">
    <location>
        <begin position="471"/>
        <end position="482"/>
    </location>
</feature>
<feature type="helix" evidence="23">
    <location>
        <begin position="486"/>
        <end position="494"/>
    </location>
</feature>
<feature type="turn" evidence="22">
    <location>
        <begin position="495"/>
        <end position="497"/>
    </location>
</feature>
<feature type="helix" evidence="23">
    <location>
        <begin position="500"/>
        <end position="502"/>
    </location>
</feature>
<feature type="strand" evidence="23">
    <location>
        <begin position="505"/>
        <end position="509"/>
    </location>
</feature>
<feature type="strand" evidence="23">
    <location>
        <begin position="519"/>
        <end position="521"/>
    </location>
</feature>
<feature type="helix" evidence="23">
    <location>
        <begin position="523"/>
        <end position="531"/>
    </location>
</feature>